<name>SCR18_NOTSL</name>
<protein>
    <recommendedName>
        <fullName>S-crystallin SL18</fullName>
    </recommendedName>
</protein>
<organism>
    <name type="scientific">Nototodarus sloanii</name>
    <name type="common">Wellington flying squid</name>
    <name type="synonym">Ommastrephes sloanei</name>
    <dbReference type="NCBI Taxonomy" id="215440"/>
    <lineage>
        <taxon>Eukaryota</taxon>
        <taxon>Metazoa</taxon>
        <taxon>Spiralia</taxon>
        <taxon>Lophotrochozoa</taxon>
        <taxon>Mollusca</taxon>
        <taxon>Cephalopoda</taxon>
        <taxon>Coleoidea</taxon>
        <taxon>Decapodiformes</taxon>
        <taxon>Oegopsida</taxon>
        <taxon>Ommastrephidae</taxon>
        <taxon>Nototodarus</taxon>
    </lineage>
</organism>
<proteinExistence type="evidence at transcript level"/>
<sequence>MPKYTLYYFNSRGRAEICRMLFAAANIPYNDVRIDYSEWDIYRSKMPGSCLPVLEINDSIQIPQTMAIARYLARQFGFYGKHHLDMARVDFICDSFYDIFNDYMRMYHDQKGRVMFELMSQMREWYAARNENSGYEECYMQPSMAPSAQMSQEVDNSDTLADCSEMRSQDSMVEPPSQKLSPELESQSSLCSERPQCGPPDPMMGSDFERLSFNEGRMLEMRRRYDETCRRVLPFLEGTLKQRYGGDRYFMGEYMTMCDLMCYCALENPLLDNAYLLHPYPKLRGLRDRVSRNQRINSYFTLRNYTDF</sequence>
<feature type="chain" id="PRO_0000186001" description="S-crystallin SL18">
    <location>
        <begin position="1"/>
        <end position="308"/>
    </location>
</feature>
<feature type="domain" description="GST N-terminal">
    <location>
        <begin position="2"/>
        <end position="80"/>
    </location>
</feature>
<feature type="domain" description="GST C-terminal">
    <location>
        <begin position="185"/>
        <end position="308"/>
    </location>
</feature>
<feature type="region of interest" description="Disordered" evidence="1">
    <location>
        <begin position="165"/>
        <end position="205"/>
    </location>
</feature>
<feature type="compositionally biased region" description="Polar residues" evidence="1">
    <location>
        <begin position="178"/>
        <end position="191"/>
    </location>
</feature>
<accession>P27016</accession>
<dbReference type="EMBL" id="M74326">
    <property type="protein sequence ID" value="AAA29404.1"/>
    <property type="molecule type" value="mRNA"/>
</dbReference>
<dbReference type="PIR" id="S14892">
    <property type="entry name" value="S14892"/>
</dbReference>
<dbReference type="SMR" id="P27016"/>
<dbReference type="GO" id="GO:0004364">
    <property type="term" value="F:glutathione transferase activity"/>
    <property type="evidence" value="ECO:0007669"/>
    <property type="project" value="TreeGrafter"/>
</dbReference>
<dbReference type="GO" id="GO:0005212">
    <property type="term" value="F:structural constituent of eye lens"/>
    <property type="evidence" value="ECO:0007669"/>
    <property type="project" value="UniProtKB-KW"/>
</dbReference>
<dbReference type="GO" id="GO:0006749">
    <property type="term" value="P:glutathione metabolic process"/>
    <property type="evidence" value="ECO:0007669"/>
    <property type="project" value="TreeGrafter"/>
</dbReference>
<dbReference type="CDD" id="cd03192">
    <property type="entry name" value="GST_C_Sigma_like"/>
    <property type="match status" value="1"/>
</dbReference>
<dbReference type="CDD" id="cd03039">
    <property type="entry name" value="GST_N_Sigma_like"/>
    <property type="match status" value="1"/>
</dbReference>
<dbReference type="FunFam" id="3.40.30.10:FF:000258">
    <property type="entry name" value="Glutathione S-transferase"/>
    <property type="match status" value="1"/>
</dbReference>
<dbReference type="Gene3D" id="1.20.1050.10">
    <property type="match status" value="2"/>
</dbReference>
<dbReference type="Gene3D" id="3.40.30.10">
    <property type="entry name" value="Glutaredoxin"/>
    <property type="match status" value="1"/>
</dbReference>
<dbReference type="InterPro" id="IPR010987">
    <property type="entry name" value="Glutathione-S-Trfase_C-like"/>
</dbReference>
<dbReference type="InterPro" id="IPR036282">
    <property type="entry name" value="Glutathione-S-Trfase_C_sf"/>
</dbReference>
<dbReference type="InterPro" id="IPR040079">
    <property type="entry name" value="Glutathione_S-Trfase"/>
</dbReference>
<dbReference type="InterPro" id="IPR004045">
    <property type="entry name" value="Glutathione_S-Trfase_N"/>
</dbReference>
<dbReference type="InterPro" id="IPR004046">
    <property type="entry name" value="GST_C"/>
</dbReference>
<dbReference type="InterPro" id="IPR050213">
    <property type="entry name" value="GST_superfamily"/>
</dbReference>
<dbReference type="InterPro" id="IPR003083">
    <property type="entry name" value="S-crystallin"/>
</dbReference>
<dbReference type="InterPro" id="IPR036249">
    <property type="entry name" value="Thioredoxin-like_sf"/>
</dbReference>
<dbReference type="PANTHER" id="PTHR11571">
    <property type="entry name" value="GLUTATHIONE S-TRANSFERASE"/>
    <property type="match status" value="1"/>
</dbReference>
<dbReference type="PANTHER" id="PTHR11571:SF150">
    <property type="entry name" value="GLUTATHIONE S-TRANSFERASE"/>
    <property type="match status" value="1"/>
</dbReference>
<dbReference type="Pfam" id="PF14497">
    <property type="entry name" value="GST_C_3"/>
    <property type="match status" value="1"/>
</dbReference>
<dbReference type="Pfam" id="PF02798">
    <property type="entry name" value="GST_N"/>
    <property type="match status" value="1"/>
</dbReference>
<dbReference type="PRINTS" id="PR01269">
    <property type="entry name" value="SCRYSTALLIN"/>
</dbReference>
<dbReference type="SFLD" id="SFLDS00019">
    <property type="entry name" value="Glutathione_Transferase_(cytos"/>
    <property type="match status" value="1"/>
</dbReference>
<dbReference type="SUPFAM" id="SSF47616">
    <property type="entry name" value="GST C-terminal domain-like"/>
    <property type="match status" value="1"/>
</dbReference>
<dbReference type="SUPFAM" id="SSF52833">
    <property type="entry name" value="Thioredoxin-like"/>
    <property type="match status" value="1"/>
</dbReference>
<dbReference type="PROSITE" id="PS50405">
    <property type="entry name" value="GST_CTER"/>
    <property type="match status" value="1"/>
</dbReference>
<dbReference type="PROSITE" id="PS50404">
    <property type="entry name" value="GST_NTER"/>
    <property type="match status" value="1"/>
</dbReference>
<evidence type="ECO:0000256" key="1">
    <source>
        <dbReference type="SAM" id="MobiDB-lite"/>
    </source>
</evidence>
<evidence type="ECO:0000305" key="2"/>
<comment type="function">
    <text>S-crystallins are structural components of squids and octopi eye lens. Contains relatively little if any GST activity.</text>
</comment>
<comment type="tissue specificity">
    <text>Lens.</text>
</comment>
<comment type="similarity">
    <text evidence="2">Belongs to the GST superfamily.</text>
</comment>
<keyword id="KW-0273">Eye lens protein</keyword>
<reference key="1">
    <citation type="journal article" date="1992" name="J. Biol. Chem.">
        <title>Characterization of squid crystallin genes. Comparison with mammalian glutathione S-transferase genes.</title>
        <authorList>
            <person name="Tomarev S.I."/>
            <person name="Zinovieva R.D."/>
            <person name="Piatigorsky J."/>
        </authorList>
    </citation>
    <scope>NUCLEOTIDE SEQUENCE [MRNA]</scope>
</reference>